<accession>Q9UTT1</accession>
<protein>
    <recommendedName>
        <fullName evidence="9">Ubiquitin carboxyl-terminal hydrolase 15</fullName>
        <ecNumber evidence="7">3.4.19.12</ecNumber>
    </recommendedName>
    <alternativeName>
        <fullName>Deubiquitinating enzyme 15</fullName>
    </alternativeName>
    <alternativeName>
        <fullName>Ubiquitin thioesterase 15</fullName>
    </alternativeName>
    <alternativeName>
        <fullName>Ubiquitin-specific-processing protease 15</fullName>
    </alternativeName>
</protein>
<name>UBP71_SCHPO</name>
<comment type="function">
    <text evidence="1 6 7">Hydrolase that deubiquitinates target proteins (By similarity). Cleaves the UBL propeptide in sde2 (PubMed:28947618). Involved in regulating the steady-state levels of proteins including prp4 (PubMed:11919719).</text>
</comment>
<comment type="catalytic activity">
    <reaction evidence="7">
        <text>Thiol-dependent hydrolysis of ester, thioester, amide, peptide and isopeptide bonds formed by the C-terminal Gly of ubiquitin (a 76-residue protein attached to proteins as an intracellular targeting signal).</text>
        <dbReference type="EC" id="3.4.19.12"/>
    </reaction>
</comment>
<comment type="subcellular location">
    <subcellularLocation>
        <location evidence="6 10">Nucleus</location>
    </subcellularLocation>
</comment>
<comment type="disruption phenotype">
    <text evidence="7 8">Decreases cleavage of the sde2 propeptide; simultaneous knockout of ubp5 abolishes cleavage (PubMed:28947618). Simultaneous knockout of ubp5 leads to abnormal splicing of introns featuring long spacing between the branchpoint and 3'-splice site (PubMed:28947618, PubMed:36095128). Simultaneous knockout of ubp5 leads to a growth defect and thermal stress sensitivity (PubMed:28947618).</text>
</comment>
<comment type="similarity">
    <text evidence="9">Belongs to the peptidase C19 family.</text>
</comment>
<feature type="chain" id="PRO_0000080614" description="Ubiquitin carboxyl-terminal hydrolase 15">
    <location>
        <begin position="1"/>
        <end position="1129"/>
    </location>
</feature>
<feature type="domain" description="MATH" evidence="2">
    <location>
        <begin position="51"/>
        <end position="204"/>
    </location>
</feature>
<feature type="domain" description="USP">
    <location>
        <begin position="230"/>
        <end position="545"/>
    </location>
</feature>
<feature type="region of interest" description="Disordered" evidence="5">
    <location>
        <begin position="1"/>
        <end position="26"/>
    </location>
</feature>
<feature type="compositionally biased region" description="Acidic residues" evidence="5">
    <location>
        <begin position="7"/>
        <end position="23"/>
    </location>
</feature>
<feature type="active site" description="Nucleophile" evidence="3 4">
    <location>
        <position position="239"/>
    </location>
</feature>
<feature type="active site" description="Proton acceptor" evidence="3 4">
    <location>
        <position position="481"/>
    </location>
</feature>
<feature type="mutagenesis site" description="Decreases cleavage of the sde2 propeptide." evidence="7">
    <original>C</original>
    <variation>S</variation>
    <location>
        <position position="239"/>
    </location>
</feature>
<feature type="sequence conflict" description="In Ref. 1; AAF01440." evidence="9" ref="1">
    <original>H</original>
    <variation>D</variation>
    <location>
        <position position="42"/>
    </location>
</feature>
<reference key="1">
    <citation type="journal article" date="2002" name="Mol. Genet. Genomics">
        <title>The deubiquitinating enzyme Ubp21p of fission yeast stabilizes a mutant form of protein kinase Prp4p.</title>
        <authorList>
            <person name="Richert K."/>
            <person name="Schmidt H."/>
            <person name="Gross T."/>
            <person name="Kaeufer N.F."/>
        </authorList>
    </citation>
    <scope>NUCLEOTIDE SEQUENCE [GENOMIC DNA]</scope>
    <scope>FUNCTION</scope>
    <scope>SUBCELLULAR LOCATION</scope>
    <source>
        <strain>972 / ATCC 24843</strain>
    </source>
</reference>
<reference key="2">
    <citation type="journal article" date="2002" name="Nature">
        <title>The genome sequence of Schizosaccharomyces pombe.</title>
        <authorList>
            <person name="Wood V."/>
            <person name="Gwilliam R."/>
            <person name="Rajandream M.A."/>
            <person name="Lyne M.H."/>
            <person name="Lyne R."/>
            <person name="Stewart A."/>
            <person name="Sgouros J.G."/>
            <person name="Peat N."/>
            <person name="Hayles J."/>
            <person name="Baker S.G."/>
            <person name="Basham D."/>
            <person name="Bowman S."/>
            <person name="Brooks K."/>
            <person name="Brown D."/>
            <person name="Brown S."/>
            <person name="Chillingworth T."/>
            <person name="Churcher C.M."/>
            <person name="Collins M."/>
            <person name="Connor R."/>
            <person name="Cronin A."/>
            <person name="Davis P."/>
            <person name="Feltwell T."/>
            <person name="Fraser A."/>
            <person name="Gentles S."/>
            <person name="Goble A."/>
            <person name="Hamlin N."/>
            <person name="Harris D.E."/>
            <person name="Hidalgo J."/>
            <person name="Hodgson G."/>
            <person name="Holroyd S."/>
            <person name="Hornsby T."/>
            <person name="Howarth S."/>
            <person name="Huckle E.J."/>
            <person name="Hunt S."/>
            <person name="Jagels K."/>
            <person name="James K.D."/>
            <person name="Jones L."/>
            <person name="Jones M."/>
            <person name="Leather S."/>
            <person name="McDonald S."/>
            <person name="McLean J."/>
            <person name="Mooney P."/>
            <person name="Moule S."/>
            <person name="Mungall K.L."/>
            <person name="Murphy L.D."/>
            <person name="Niblett D."/>
            <person name="Odell C."/>
            <person name="Oliver K."/>
            <person name="O'Neil S."/>
            <person name="Pearson D."/>
            <person name="Quail M.A."/>
            <person name="Rabbinowitsch E."/>
            <person name="Rutherford K.M."/>
            <person name="Rutter S."/>
            <person name="Saunders D."/>
            <person name="Seeger K."/>
            <person name="Sharp S."/>
            <person name="Skelton J."/>
            <person name="Simmonds M.N."/>
            <person name="Squares R."/>
            <person name="Squares S."/>
            <person name="Stevens K."/>
            <person name="Taylor K."/>
            <person name="Taylor R.G."/>
            <person name="Tivey A."/>
            <person name="Walsh S.V."/>
            <person name="Warren T."/>
            <person name="Whitehead S."/>
            <person name="Woodward J.R."/>
            <person name="Volckaert G."/>
            <person name="Aert R."/>
            <person name="Robben J."/>
            <person name="Grymonprez B."/>
            <person name="Weltjens I."/>
            <person name="Vanstreels E."/>
            <person name="Rieger M."/>
            <person name="Schaefer M."/>
            <person name="Mueller-Auer S."/>
            <person name="Gabel C."/>
            <person name="Fuchs M."/>
            <person name="Duesterhoeft A."/>
            <person name="Fritzc C."/>
            <person name="Holzer E."/>
            <person name="Moestl D."/>
            <person name="Hilbert H."/>
            <person name="Borzym K."/>
            <person name="Langer I."/>
            <person name="Beck A."/>
            <person name="Lehrach H."/>
            <person name="Reinhardt R."/>
            <person name="Pohl T.M."/>
            <person name="Eger P."/>
            <person name="Zimmermann W."/>
            <person name="Wedler H."/>
            <person name="Wambutt R."/>
            <person name="Purnelle B."/>
            <person name="Goffeau A."/>
            <person name="Cadieu E."/>
            <person name="Dreano S."/>
            <person name="Gloux S."/>
            <person name="Lelaure V."/>
            <person name="Mottier S."/>
            <person name="Galibert F."/>
            <person name="Aves S.J."/>
            <person name="Xiang Z."/>
            <person name="Hunt C."/>
            <person name="Moore K."/>
            <person name="Hurst S.M."/>
            <person name="Lucas M."/>
            <person name="Rochet M."/>
            <person name="Gaillardin C."/>
            <person name="Tallada V.A."/>
            <person name="Garzon A."/>
            <person name="Thode G."/>
            <person name="Daga R.R."/>
            <person name="Cruzado L."/>
            <person name="Jimenez J."/>
            <person name="Sanchez M."/>
            <person name="del Rey F."/>
            <person name="Benito J."/>
            <person name="Dominguez A."/>
            <person name="Revuelta J.L."/>
            <person name="Moreno S."/>
            <person name="Armstrong J."/>
            <person name="Forsburg S.L."/>
            <person name="Cerutti L."/>
            <person name="Lowe T."/>
            <person name="McCombie W.R."/>
            <person name="Paulsen I."/>
            <person name="Potashkin J."/>
            <person name="Shpakovski G.V."/>
            <person name="Ussery D."/>
            <person name="Barrell B.G."/>
            <person name="Nurse P."/>
        </authorList>
    </citation>
    <scope>NUCLEOTIDE SEQUENCE [LARGE SCALE GENOMIC DNA]</scope>
    <source>
        <strain>972 / ATCC 24843</strain>
    </source>
</reference>
<reference key="3">
    <citation type="journal article" date="2018" name="EMBO J.">
        <title>Sde2 is an intron-specific pre-mRNA splicing regulator activated by ubiquitin-like processing.</title>
        <authorList>
            <person name="Thakran P."/>
            <person name="Pandit P.A."/>
            <person name="Datta S."/>
            <person name="Kolathur K.K."/>
            <person name="Pleiss J.A."/>
            <person name="Mishra S.K."/>
        </authorList>
    </citation>
    <scope>FUNCTION</scope>
    <scope>CATALYTIC ACTIVITY</scope>
    <scope>SUBCELLULAR LOCATION</scope>
    <scope>DISRUPTION PHENOTYPE</scope>
    <scope>MUTAGENESIS OF CYS-239</scope>
</reference>
<reference key="4">
    <citation type="journal article" date="2022" name="Nucleic Acids Res.">
        <title>Splicing of branchpoint-distant exons is promoted by Cactin, Tls1 and the ubiquitin-fold-activated Sde2.</title>
        <authorList>
            <person name="Anil A.T."/>
            <person name="Choudhary K."/>
            <person name="Pandian R."/>
            <person name="Gupta P."/>
            <person name="Thakran P."/>
            <person name="Singh A."/>
            <person name="Sharma M."/>
            <person name="Mishra S.K."/>
        </authorList>
    </citation>
    <scope>DISRUPTION PHENOTYPE</scope>
</reference>
<evidence type="ECO:0000250" key="1">
    <source>
        <dbReference type="UniProtKB" id="Q93009"/>
    </source>
</evidence>
<evidence type="ECO:0000255" key="2">
    <source>
        <dbReference type="PROSITE-ProRule" id="PRU00129"/>
    </source>
</evidence>
<evidence type="ECO:0000255" key="3">
    <source>
        <dbReference type="PROSITE-ProRule" id="PRU10092"/>
    </source>
</evidence>
<evidence type="ECO:0000255" key="4">
    <source>
        <dbReference type="PROSITE-ProRule" id="PRU10093"/>
    </source>
</evidence>
<evidence type="ECO:0000256" key="5">
    <source>
        <dbReference type="SAM" id="MobiDB-lite"/>
    </source>
</evidence>
<evidence type="ECO:0000269" key="6">
    <source>
    </source>
</evidence>
<evidence type="ECO:0000269" key="7">
    <source>
    </source>
</evidence>
<evidence type="ECO:0000269" key="8">
    <source>
    </source>
</evidence>
<evidence type="ECO:0000305" key="9"/>
<evidence type="ECO:0000305" key="10">
    <source>
    </source>
</evidence>
<evidence type="ECO:0000312" key="11">
    <source>
        <dbReference type="PomBase" id="SPBC713.02c"/>
    </source>
</evidence>
<organism>
    <name type="scientific">Schizosaccharomyces pombe (strain 972 / ATCC 24843)</name>
    <name type="common">Fission yeast</name>
    <dbReference type="NCBI Taxonomy" id="284812"/>
    <lineage>
        <taxon>Eukaryota</taxon>
        <taxon>Fungi</taxon>
        <taxon>Dikarya</taxon>
        <taxon>Ascomycota</taxon>
        <taxon>Taphrinomycotina</taxon>
        <taxon>Schizosaccharomycetes</taxon>
        <taxon>Schizosaccharomycetales</taxon>
        <taxon>Schizosaccharomycetaceae</taxon>
        <taxon>Schizosaccharomyces</taxon>
    </lineage>
</organism>
<proteinExistence type="evidence at protein level"/>
<dbReference type="EC" id="3.4.19.12" evidence="7"/>
<dbReference type="EMBL" id="AF187961">
    <property type="protein sequence ID" value="AAF01440.1"/>
    <property type="molecule type" value="Genomic_DNA"/>
</dbReference>
<dbReference type="EMBL" id="CU329671">
    <property type="protein sequence ID" value="CAC22603.1"/>
    <property type="molecule type" value="Genomic_DNA"/>
</dbReference>
<dbReference type="RefSeq" id="NP_595341.1">
    <property type="nucleotide sequence ID" value="NM_001021249.2"/>
</dbReference>
<dbReference type="SMR" id="Q9UTT1"/>
<dbReference type="BioGRID" id="277646">
    <property type="interactions" value="14"/>
</dbReference>
<dbReference type="FunCoup" id="Q9UTT1">
    <property type="interactions" value="1337"/>
</dbReference>
<dbReference type="IntAct" id="Q9UTT1">
    <property type="interactions" value="1"/>
</dbReference>
<dbReference type="STRING" id="284812.Q9UTT1"/>
<dbReference type="MEROPS" id="C19.A59"/>
<dbReference type="iPTMnet" id="Q9UTT1"/>
<dbReference type="PaxDb" id="4896-SPBC713.02c.1"/>
<dbReference type="EnsemblFungi" id="SPBC713.02c.1">
    <property type="protein sequence ID" value="SPBC713.02c.1:pep"/>
    <property type="gene ID" value="SPBC713.02c"/>
</dbReference>
<dbReference type="GeneID" id="2541131"/>
<dbReference type="KEGG" id="spo:2541131"/>
<dbReference type="PomBase" id="SPBC713.02c">
    <property type="gene designation" value="ubp15"/>
</dbReference>
<dbReference type="VEuPathDB" id="FungiDB:SPBC713.02c"/>
<dbReference type="eggNOG" id="KOG1863">
    <property type="taxonomic scope" value="Eukaryota"/>
</dbReference>
<dbReference type="HOGENOM" id="CLU_003532_2_1_1"/>
<dbReference type="InParanoid" id="Q9UTT1"/>
<dbReference type="OMA" id="HTAHHRF"/>
<dbReference type="PhylomeDB" id="Q9UTT1"/>
<dbReference type="Reactome" id="R-SPO-5689880">
    <property type="pathway name" value="Ub-specific processing proteases"/>
</dbReference>
<dbReference type="PRO" id="PR:Q9UTT1"/>
<dbReference type="Proteomes" id="UP000002485">
    <property type="component" value="Chromosome II"/>
</dbReference>
<dbReference type="GO" id="GO:0005737">
    <property type="term" value="C:cytoplasm"/>
    <property type="evidence" value="ECO:0007005"/>
    <property type="project" value="PomBase"/>
</dbReference>
<dbReference type="GO" id="GO:0005829">
    <property type="term" value="C:cytosol"/>
    <property type="evidence" value="ECO:0007005"/>
    <property type="project" value="PomBase"/>
</dbReference>
<dbReference type="GO" id="GO:0005634">
    <property type="term" value="C:nucleus"/>
    <property type="evidence" value="ECO:0000314"/>
    <property type="project" value="PomBase"/>
</dbReference>
<dbReference type="GO" id="GO:0004843">
    <property type="term" value="F:cysteine-type deubiquitinase activity"/>
    <property type="evidence" value="ECO:0000318"/>
    <property type="project" value="GO_Central"/>
</dbReference>
<dbReference type="GO" id="GO:0101005">
    <property type="term" value="F:deubiquitinase activity"/>
    <property type="evidence" value="ECO:0000314"/>
    <property type="project" value="PomBase"/>
</dbReference>
<dbReference type="GO" id="GO:0004175">
    <property type="term" value="F:endopeptidase activity"/>
    <property type="evidence" value="ECO:0000314"/>
    <property type="project" value="PomBase"/>
</dbReference>
<dbReference type="GO" id="GO:0140492">
    <property type="term" value="F:metal-dependent deubiquitinase activity"/>
    <property type="evidence" value="ECO:0000314"/>
    <property type="project" value="PomBase"/>
</dbReference>
<dbReference type="GO" id="GO:1990505">
    <property type="term" value="P:mitotic DNA replication maintenance of fidelity"/>
    <property type="evidence" value="ECO:0000315"/>
    <property type="project" value="PomBase"/>
</dbReference>
<dbReference type="GO" id="GO:1904332">
    <property type="term" value="P:negative regulation of error-prone translesion synthesis"/>
    <property type="evidence" value="ECO:0000315"/>
    <property type="project" value="PomBase"/>
</dbReference>
<dbReference type="GO" id="GO:0016579">
    <property type="term" value="P:protein deubiquitination"/>
    <property type="evidence" value="ECO:0007669"/>
    <property type="project" value="InterPro"/>
</dbReference>
<dbReference type="GO" id="GO:0006508">
    <property type="term" value="P:proteolysis"/>
    <property type="evidence" value="ECO:0007669"/>
    <property type="project" value="UniProtKB-KW"/>
</dbReference>
<dbReference type="GO" id="GO:0031647">
    <property type="term" value="P:regulation of protein stability"/>
    <property type="evidence" value="ECO:0000318"/>
    <property type="project" value="GO_Central"/>
</dbReference>
<dbReference type="CDD" id="cd03775">
    <property type="entry name" value="MATH_Ubp21p"/>
    <property type="match status" value="1"/>
</dbReference>
<dbReference type="CDD" id="cd02659">
    <property type="entry name" value="peptidase_C19C"/>
    <property type="match status" value="1"/>
</dbReference>
<dbReference type="FunFam" id="3.10.20.90:FF:000050">
    <property type="entry name" value="Ubiquitin carboxyl-terminal hydrolase 13"/>
    <property type="match status" value="1"/>
</dbReference>
<dbReference type="FunFam" id="2.60.210.10:FF:000011">
    <property type="entry name" value="Ubiquitin carboxyl-terminal hydrolase 7"/>
    <property type="match status" value="1"/>
</dbReference>
<dbReference type="FunFam" id="3.90.70.10:FF:000005">
    <property type="entry name" value="Ubiquitin carboxyl-terminal hydrolase 7"/>
    <property type="match status" value="1"/>
</dbReference>
<dbReference type="Gene3D" id="2.60.210.10">
    <property type="entry name" value="Apoptosis, Tumor Necrosis Factor Receptor Associated Protein 2, Chain A"/>
    <property type="match status" value="1"/>
</dbReference>
<dbReference type="Gene3D" id="3.90.70.10">
    <property type="entry name" value="Cysteine proteinases"/>
    <property type="match status" value="1"/>
</dbReference>
<dbReference type="Gene3D" id="3.10.20.90">
    <property type="entry name" value="Phosphatidylinositol 3-kinase Catalytic Subunit, Chain A, domain 1"/>
    <property type="match status" value="2"/>
</dbReference>
<dbReference type="InterPro" id="IPR002083">
    <property type="entry name" value="MATH/TRAF_dom"/>
</dbReference>
<dbReference type="InterPro" id="IPR038765">
    <property type="entry name" value="Papain-like_cys_pep_sf"/>
</dbReference>
<dbReference type="InterPro" id="IPR050164">
    <property type="entry name" value="Peptidase_C19"/>
</dbReference>
<dbReference type="InterPro" id="IPR001394">
    <property type="entry name" value="Peptidase_C19_UCH"/>
</dbReference>
<dbReference type="InterPro" id="IPR008974">
    <property type="entry name" value="TRAF-like"/>
</dbReference>
<dbReference type="InterPro" id="IPR024729">
    <property type="entry name" value="USP7_ICP0-binding_dom"/>
</dbReference>
<dbReference type="InterPro" id="IPR029346">
    <property type="entry name" value="USP_C"/>
</dbReference>
<dbReference type="InterPro" id="IPR018200">
    <property type="entry name" value="USP_CS"/>
</dbReference>
<dbReference type="InterPro" id="IPR028889">
    <property type="entry name" value="USP_dom"/>
</dbReference>
<dbReference type="PANTHER" id="PTHR24006">
    <property type="entry name" value="UBIQUITIN CARBOXYL-TERMINAL HYDROLASE"/>
    <property type="match status" value="1"/>
</dbReference>
<dbReference type="PANTHER" id="PTHR24006:SF889">
    <property type="entry name" value="UBIQUITIN CARBOXYL-TERMINAL HYDROLASE 15"/>
    <property type="match status" value="1"/>
</dbReference>
<dbReference type="Pfam" id="PF00443">
    <property type="entry name" value="UCH"/>
    <property type="match status" value="1"/>
</dbReference>
<dbReference type="Pfam" id="PF14533">
    <property type="entry name" value="USP7_C2"/>
    <property type="match status" value="1"/>
</dbReference>
<dbReference type="Pfam" id="PF12436">
    <property type="entry name" value="USP7_ICP0_bdg"/>
    <property type="match status" value="1"/>
</dbReference>
<dbReference type="SMART" id="SM00061">
    <property type="entry name" value="MATH"/>
    <property type="match status" value="1"/>
</dbReference>
<dbReference type="SUPFAM" id="SSF54001">
    <property type="entry name" value="Cysteine proteinases"/>
    <property type="match status" value="1"/>
</dbReference>
<dbReference type="SUPFAM" id="SSF49599">
    <property type="entry name" value="TRAF domain-like"/>
    <property type="match status" value="1"/>
</dbReference>
<dbReference type="PROSITE" id="PS50144">
    <property type="entry name" value="MATH"/>
    <property type="match status" value="1"/>
</dbReference>
<dbReference type="PROSITE" id="PS00972">
    <property type="entry name" value="USP_1"/>
    <property type="match status" value="1"/>
</dbReference>
<dbReference type="PROSITE" id="PS00973">
    <property type="entry name" value="USP_2"/>
    <property type="match status" value="1"/>
</dbReference>
<dbReference type="PROSITE" id="PS50235">
    <property type="entry name" value="USP_3"/>
    <property type="match status" value="1"/>
</dbReference>
<keyword id="KW-0378">Hydrolase</keyword>
<keyword id="KW-0539">Nucleus</keyword>
<keyword id="KW-0645">Protease</keyword>
<keyword id="KW-1185">Reference proteome</keyword>
<keyword id="KW-0788">Thiol protease</keyword>
<keyword id="KW-0833">Ubl conjugation pathway</keyword>
<sequence length="1129" mass="130832">MVLSNVDAEEVNMDSSMELEESSQEPLRADNYEEIYNSLVHHEPDLEEAAHASYSWVVKNFSTLEDKTYSPLFKAGHTTWRIVLFPKGCNQTEYASVFLEYLPQCKVEAIRKYEAELAAGKTPTIDPEIVNDETYSCCAQFALSLSNVQDPTVMQINTSHHRFRSEVKDWGFTRFVDLRKIAVPTPEFPVPFLENDEICISVTVRVLQDPTGVLWHSFVNYNSKKETGYVGLKNQGATCYMNSLLQSLFFTNIFRKTVYKIPTDNDDSRDSVAYALQRVFYNLEKQREPVSTTELTRSFGWNSFDSFMQHDIQEFNRVLQDNLEKKMKGTEVENALNDIFVGKMKSYVKCIDVNYESSRVEDFWDIQLNVKGMDTLEDSFRDAIQVETLTGDNKYYAEGHGLQDAHKGIIFESLPNVLQLQLKRFDYDMLRDMMVKINDRHEFPLEIDLEPYLSETADKSESHVYVLHGVLVHGGDLHGGHYYALIKPEKDSNWFKFDDDRVTRATIKEVLEDNYGGEPAGRAKGYNGNPFKRFMNAYMLVYFRKSRLDHILSPVTAEDVPFHVRNTLDEEHRVVERKLLEREEQQIYRRVRVLTTDGFKKYHGFDMTDFSASDDDPVLITTKIKRNANIWDLQKHLAGLLNRDTSGIRIWLMTNRQNRTVRVDLPLDKKTILVDQICDMHIRKDMDMRVYVEFLSEHNQLLADFGATDDNDFDTYIFLKIFDYETQQISGLADLHVSKNSPISSLSEWIREHLKWSSDVPITYYEEIKTGMVDVLDPNASFEKSEIQVGDIICFEKKLVHDSSSDTSHPYKSALDLYDFMAHRVVITFEPRYSDDTNNGVFDLVLTTHTNYTDMARAVANKLNVDPNYLQFTMAHLPSRTPRSVIRNPSKFTLQNAIPSTYSHNQNVVMFYEVLDITLSELERKQLIRVHFLSNGISHETQMEFYVDKEGTVEDILRQVTQKVPLNAEDASRLRLYEVYNHRILKSHLPTDGIYDLNEFSTAYVEVTPKEEQMQLKTDDAVSIVVQHFFKDLSRLHDIPFYFVLLRGETLKDLKKRLQKRLGYNDTQFSKVKLAVLQAQSFGKPYYLTDDDEVLYGELEPQSHILGLDHPPANGSAQYHGMDQAIRMK</sequence>
<gene>
    <name evidence="11" type="primary">ubp15</name>
    <name evidence="11" type="synonym">ubp21</name>
    <name evidence="11" type="synonym">ubpd</name>
    <name evidence="11" type="ORF">SPBC713.02c</name>
</gene>